<evidence type="ECO:0000250" key="1"/>
<evidence type="ECO:0000255" key="2"/>
<evidence type="ECO:0000269" key="3">
    <source>
    </source>
</evidence>
<evidence type="ECO:0000269" key="4">
    <source>
    </source>
</evidence>
<evidence type="ECO:0000305" key="5"/>
<organism>
    <name type="scientific">Anthoceros angustus</name>
    <name type="common">Hornwort</name>
    <name type="synonym">Anthoceros formosae</name>
    <dbReference type="NCBI Taxonomy" id="48387"/>
    <lineage>
        <taxon>Eukaryota</taxon>
        <taxon>Viridiplantae</taxon>
        <taxon>Streptophyta</taxon>
        <taxon>Embryophyta</taxon>
        <taxon>Anthocerotophyta</taxon>
        <taxon>Anthocerotopsida</taxon>
        <taxon>Anthocerotidae</taxon>
        <taxon>Anthocerotales</taxon>
        <taxon>Anthocerotaceae</taxon>
        <taxon>Anthoceros</taxon>
    </lineage>
</organism>
<proteinExistence type="evidence at transcript level"/>
<geneLocation type="chloroplast"/>
<name>YCF4_ANTAG</name>
<protein>
    <recommendedName>
        <fullName>Photosystem I assembly protein Ycf4</fullName>
    </recommendedName>
</protein>
<comment type="function">
    <text evidence="1">Seems to be required for the assembly of the photosystem I complex.</text>
</comment>
<comment type="subcellular location">
    <subcellularLocation>
        <location evidence="1">Plastid</location>
        <location evidence="1">Chloroplast thylakoid membrane</location>
        <topology evidence="1">Multi-pass membrane protein</topology>
    </subcellularLocation>
</comment>
<comment type="RNA editing">
    <location>
        <position position="18" evidence="3 4"/>
    </location>
    <location>
        <position position="33" evidence="3 4"/>
    </location>
    <location>
        <position position="36" evidence="3 4"/>
    </location>
    <location>
        <position position="37" evidence="3 4"/>
    </location>
    <location>
        <position position="56" evidence="3 4"/>
    </location>
    <location>
        <position position="62" evidence="3 4"/>
    </location>
    <location>
        <position position="110" evidence="3 4"/>
    </location>
    <location>
        <position position="120" evidence="3 4"/>
    </location>
    <text>The nonsense codons at positions 18, 56 and 62 are modified to sense codons.</text>
</comment>
<comment type="similarity">
    <text evidence="5">Belongs to the Ycf4 family.</text>
</comment>
<accession>Q85BP9</accession>
<dbReference type="EMBL" id="AB086179">
    <property type="protein sequence ID" value="BAC55360.1"/>
    <property type="molecule type" value="Genomic_DNA"/>
</dbReference>
<dbReference type="EMBL" id="AB087452">
    <property type="protein sequence ID" value="BAC55456.1"/>
    <property type="molecule type" value="mRNA"/>
</dbReference>
<dbReference type="RefSeq" id="NP_777424.1">
    <property type="nucleotide sequence ID" value="NC_004543.1"/>
</dbReference>
<dbReference type="SMR" id="Q85BP9"/>
<dbReference type="GeneID" id="2553521"/>
<dbReference type="GO" id="GO:0009535">
    <property type="term" value="C:chloroplast thylakoid membrane"/>
    <property type="evidence" value="ECO:0007669"/>
    <property type="project" value="UniProtKB-SubCell"/>
</dbReference>
<dbReference type="GO" id="GO:0009522">
    <property type="term" value="C:photosystem I"/>
    <property type="evidence" value="ECO:0007669"/>
    <property type="project" value="InterPro"/>
</dbReference>
<dbReference type="GO" id="GO:0015979">
    <property type="term" value="P:photosynthesis"/>
    <property type="evidence" value="ECO:0007669"/>
    <property type="project" value="UniProtKB-UniRule"/>
</dbReference>
<dbReference type="HAMAP" id="MF_00437">
    <property type="entry name" value="Ycf4"/>
    <property type="match status" value="1"/>
</dbReference>
<dbReference type="InterPro" id="IPR003359">
    <property type="entry name" value="PSI_Ycf4_assembly"/>
</dbReference>
<dbReference type="NCBIfam" id="NF002712">
    <property type="entry name" value="PRK02542.1"/>
    <property type="match status" value="1"/>
</dbReference>
<dbReference type="PANTHER" id="PTHR33288">
    <property type="match status" value="1"/>
</dbReference>
<dbReference type="PANTHER" id="PTHR33288:SF4">
    <property type="entry name" value="PHOTOSYSTEM I ASSEMBLY PROTEIN YCF4"/>
    <property type="match status" value="1"/>
</dbReference>
<dbReference type="Pfam" id="PF02392">
    <property type="entry name" value="Ycf4"/>
    <property type="match status" value="1"/>
</dbReference>
<sequence length="184" mass="21310">MNWESEWFRIELIRGSRRISNFFWAFILLSGALGFLSVGLSSYFGKDLISFLSYEQIVFIPQGIVMCFYGIAGSAFSLYLWGTIFWNIGSGYNKFDKGKGIVCIYRWGFPGKNRRIRIEFSMKDIEAIGMEVQEGFYPRRTLRLKIKGQQDVPLTYIGENLTLREIEEEAAELARFLQISIEGF</sequence>
<reference key="1">
    <citation type="journal article" date="2003" name="Nucleic Acids Res.">
        <title>The complete nucleotide sequence of the hornwort (Anthoceros formosae) chloroplast genome: insight into the earliest land plants.</title>
        <authorList>
            <person name="Kugita M."/>
            <person name="Kaneko A."/>
            <person name="Yamamoto Y."/>
            <person name="Takeya Y."/>
            <person name="Matsumoto T."/>
            <person name="Yoshinaga K."/>
        </authorList>
    </citation>
    <scope>NUCLEOTIDE SEQUENCE [LARGE SCALE GENOMIC DNA]</scope>
    <scope>RNA EDITING</scope>
</reference>
<reference key="2">
    <citation type="journal article" date="2003" name="Nucleic Acids Res.">
        <title>RNA editing in hornwort chloroplasts makes more than half the genes functional.</title>
        <authorList>
            <person name="Kugita M."/>
            <person name="Yamamoto Y."/>
            <person name="Fujikawa T."/>
            <person name="Matsumoto T."/>
            <person name="Yoshinaga K."/>
        </authorList>
    </citation>
    <scope>NUCLEOTIDE SEQUENCE [MRNA]</scope>
    <scope>RNA EDITING</scope>
    <source>
        <tissue>Thallus</tissue>
    </source>
</reference>
<feature type="chain" id="PRO_0000217595" description="Photosystem I assembly protein Ycf4">
    <location>
        <begin position="1"/>
        <end position="184"/>
    </location>
</feature>
<feature type="transmembrane region" description="Helical" evidence="2">
    <location>
        <begin position="21"/>
        <end position="43"/>
    </location>
</feature>
<feature type="transmembrane region" description="Helical" evidence="2">
    <location>
        <begin position="58"/>
        <end position="80"/>
    </location>
</feature>
<gene>
    <name type="primary">ycf4</name>
</gene>
<keyword id="KW-0150">Chloroplast</keyword>
<keyword id="KW-0472">Membrane</keyword>
<keyword id="KW-0602">Photosynthesis</keyword>
<keyword id="KW-0934">Plastid</keyword>
<keyword id="KW-0691">RNA editing</keyword>
<keyword id="KW-0793">Thylakoid</keyword>
<keyword id="KW-0812">Transmembrane</keyword>
<keyword id="KW-1133">Transmembrane helix</keyword>